<sequence>MVATAWANAREQVSLDPAVTNLNAGSCGPLPRPVFDRVTVRARMAAGPMDFLSRQLPPLLWTARERLAGYLGARPERLAFATNVTGAVNLVASSVQPHLAAGGEILLSDQEYAPMRWCWERVARHQGLVVRTFRLPVQPLGSPDEVVEAATAAMGPRTRLLFFSHVVSSTGLVLPATRLCEEARRRGVLTVVDGAQAPGFTDLDLAALPCDYYAGSGHKWLLAPTGVGFLHFAEDQGGVLRPPQVSWGYRPDGENPSDERNRFGSTDRLRNLECEGTRDLCPWLAVPSAIDFQAGLGHGRVRERMRELAAFTRERLSGWRGLEPVTPAHPGLSGAMTAFRLPPGTDTAGLRHGLWDRFRIDVPVLDRPDGPLLRVSTHFYNTETEVERLAEALKELSK</sequence>
<feature type="chain" id="PRO_0000150240" description="Isopenicillin N epimerase">
    <location>
        <begin position="1"/>
        <end position="398"/>
    </location>
</feature>
<feature type="region of interest" description="Disordered" evidence="2">
    <location>
        <begin position="243"/>
        <end position="264"/>
    </location>
</feature>
<feature type="compositionally biased region" description="Basic and acidic residues" evidence="2">
    <location>
        <begin position="251"/>
        <end position="264"/>
    </location>
</feature>
<feature type="modified residue" description="N6-(pyridoxal phosphate)lysine" evidence="1">
    <location>
        <position position="219"/>
    </location>
</feature>
<dbReference type="EC" id="5.1.1.17"/>
<dbReference type="EMBL" id="Z13984">
    <property type="protein sequence ID" value="CAA78377.1"/>
    <property type="molecule type" value="Genomic_DNA"/>
</dbReference>
<dbReference type="PIR" id="S30901">
    <property type="entry name" value="S30901"/>
</dbReference>
<dbReference type="SMR" id="Q03046"/>
<dbReference type="UniPathway" id="UPA00172"/>
<dbReference type="GO" id="GO:0045439">
    <property type="term" value="F:isopenicillin-N epimerase activity"/>
    <property type="evidence" value="ECO:0007669"/>
    <property type="project" value="UniProtKB-EC"/>
</dbReference>
<dbReference type="GO" id="GO:0017000">
    <property type="term" value="P:antibiotic biosynthetic process"/>
    <property type="evidence" value="ECO:0007669"/>
    <property type="project" value="UniProtKB-KW"/>
</dbReference>
<dbReference type="Gene3D" id="3.90.1150.10">
    <property type="entry name" value="Aspartate Aminotransferase, domain 1"/>
    <property type="match status" value="1"/>
</dbReference>
<dbReference type="Gene3D" id="3.40.640.10">
    <property type="entry name" value="Type I PLP-dependent aspartate aminotransferase-like (Major domain)"/>
    <property type="match status" value="1"/>
</dbReference>
<dbReference type="InterPro" id="IPR000192">
    <property type="entry name" value="Aminotrans_V_dom"/>
</dbReference>
<dbReference type="InterPro" id="IPR020578">
    <property type="entry name" value="Aminotrans_V_PyrdxlP_BS"/>
</dbReference>
<dbReference type="InterPro" id="IPR015424">
    <property type="entry name" value="PyrdxlP-dep_Trfase"/>
</dbReference>
<dbReference type="InterPro" id="IPR015421">
    <property type="entry name" value="PyrdxlP-dep_Trfase_major"/>
</dbReference>
<dbReference type="InterPro" id="IPR015422">
    <property type="entry name" value="PyrdxlP-dep_Trfase_small"/>
</dbReference>
<dbReference type="PANTHER" id="PTHR43092:SF2">
    <property type="entry name" value="HERCYNYLCYSTEINE SULFOXIDE LYASE"/>
    <property type="match status" value="1"/>
</dbReference>
<dbReference type="PANTHER" id="PTHR43092">
    <property type="entry name" value="L-CYSTEINE DESULFHYDRASE"/>
    <property type="match status" value="1"/>
</dbReference>
<dbReference type="Pfam" id="PF00266">
    <property type="entry name" value="Aminotran_5"/>
    <property type="match status" value="1"/>
</dbReference>
<dbReference type="SUPFAM" id="SSF53383">
    <property type="entry name" value="PLP-dependent transferases"/>
    <property type="match status" value="1"/>
</dbReference>
<dbReference type="PROSITE" id="PS00595">
    <property type="entry name" value="AA_TRANSFER_CLASS_5"/>
    <property type="match status" value="1"/>
</dbReference>
<reference key="1">
    <citation type="journal article" date="1993" name="Mol. Gen. Genet.">
        <title>Characterization and expression in Streptomyces lividans of cefD and cefE genes from Nocardia lactamdurans: the organization of the cephamycin gene cluster differs from that in Streptomyces clavuligerus.</title>
        <authorList>
            <person name="Coque J.J.R."/>
            <person name="Martin J.F."/>
            <person name="Liras P."/>
        </authorList>
    </citation>
    <scope>NUCLEOTIDE SEQUENCE [GENOMIC DNA]</scope>
</reference>
<evidence type="ECO:0000250" key="1"/>
<evidence type="ECO:0000256" key="2">
    <source>
        <dbReference type="SAM" id="MobiDB-lite"/>
    </source>
</evidence>
<evidence type="ECO:0000305" key="3"/>
<comment type="function">
    <text>Catalyzes the reversible isomerization between isopenicillin N and penicillin N.</text>
</comment>
<comment type="catalytic activity">
    <reaction>
        <text>isopenicillin N = penicillin N</text>
        <dbReference type="Rhea" id="RHEA:20033"/>
        <dbReference type="ChEBI" id="CHEBI:58399"/>
        <dbReference type="ChEBI" id="CHEBI:58408"/>
        <dbReference type="EC" id="5.1.1.17"/>
    </reaction>
</comment>
<comment type="cofactor">
    <cofactor>
        <name>pyridoxal 5'-phosphate</name>
        <dbReference type="ChEBI" id="CHEBI:597326"/>
    </cofactor>
</comment>
<comment type="pathway">
    <text>Antibiotic biosynthesis; cephalosporin C biosynthesis.</text>
</comment>
<comment type="similarity">
    <text evidence="3">Belongs to the class-V pyridoxal-phosphate-dependent aminotransferase family.</text>
</comment>
<gene>
    <name type="primary">cefD</name>
</gene>
<accession>Q03046</accession>
<keyword id="KW-0045">Antibiotic biosynthesis</keyword>
<keyword id="KW-0413">Isomerase</keyword>
<keyword id="KW-0663">Pyridoxal phosphate</keyword>
<protein>
    <recommendedName>
        <fullName>Isopenicillin N epimerase</fullName>
        <ecNumber>5.1.1.17</ecNumber>
    </recommendedName>
</protein>
<organism>
    <name type="scientific">Amycolatopsis lactamdurans</name>
    <name type="common">Nocardia lactamdurans</name>
    <dbReference type="NCBI Taxonomy" id="1913"/>
    <lineage>
        <taxon>Bacteria</taxon>
        <taxon>Bacillati</taxon>
        <taxon>Actinomycetota</taxon>
        <taxon>Actinomycetes</taxon>
        <taxon>Pseudonocardiales</taxon>
        <taxon>Pseudonocardiaceae</taxon>
        <taxon>Amycolatopsis</taxon>
    </lineage>
</organism>
<name>CEFD_AMYLA</name>
<proteinExistence type="inferred from homology"/>